<accession>Q05209</accession>
<accession>A4D1C5</accession>
<accession>B4DKY2</accession>
<accession>E9PBR5</accession>
<accession>E9PEH9</accession>
<accession>Q16130</accession>
<accession>Q59FD6</accession>
<accession>Q75MN8</accession>
<accession>Q86XU4</accession>
<comment type="function">
    <text evidence="10 11 12">Dephosphorylates a range of proteins, and thereby regulates cellular signaling cascades (PubMed:18559503). Dephosphorylates cellular tyrosine kinases, such as ERBB2 and PTK2B/PYK2, and thereby regulates signaling via ERBB2 and PTK2B/PYK2 (PubMed:17329398, PubMed:27134172). Selectively dephosphorylates ERBB2 phosphorylated at 'Tyr-1112', 'Tyr-1196', and/or 'Tyr-1248' (PubMed:27134172).</text>
</comment>
<comment type="catalytic activity">
    <reaction evidence="4 12 14">
        <text>O-phospho-L-tyrosyl-[protein] + H2O = L-tyrosyl-[protein] + phosphate</text>
        <dbReference type="Rhea" id="RHEA:10684"/>
        <dbReference type="Rhea" id="RHEA-COMP:10136"/>
        <dbReference type="Rhea" id="RHEA-COMP:20101"/>
        <dbReference type="ChEBI" id="CHEBI:15377"/>
        <dbReference type="ChEBI" id="CHEBI:43474"/>
        <dbReference type="ChEBI" id="CHEBI:46858"/>
        <dbReference type="ChEBI" id="CHEBI:61978"/>
        <dbReference type="EC" id="3.1.3.48"/>
    </reaction>
</comment>
<comment type="subunit">
    <text evidence="2 10 11 15">Interacts with TGFB1I1 (By similarity). Interacts with PSTPIP1 (PubMed:9857189). Interacts with PTK2B/PYK2 (PubMed:17329398). Interacts with LPXN (By similarity). Interacts with SORBS2; this interaction greatly enhances WASF1 dephosphorylation and might mediate partial translocation to focal adhesion sites (PubMed:18559503).</text>
</comment>
<comment type="interaction">
    <interactant intactId="EBI-2266035">
        <id>Q05209</id>
    </interactant>
    <interactant intactId="EBI-702093">
        <id>P56945</id>
        <label>BCAR1</label>
    </interactant>
    <organismsDiffer>false</organismsDiffer>
    <experiments>5</experiments>
</comment>
<comment type="interaction">
    <interactant intactId="EBI-2266035">
        <id>Q05209</id>
    </interactant>
    <interactant intactId="EBI-297353">
        <id>P00533</id>
        <label>EGFR</label>
    </interactant>
    <organismsDiffer>false</organismsDiffer>
    <experiments>5</experiments>
</comment>
<comment type="interaction">
    <interactant intactId="EBI-2266035">
        <id>Q05209</id>
    </interactant>
    <interactant intactId="EBI-641062">
        <id>P04626</id>
        <label>ERBB2</label>
    </interactant>
    <organismsDiffer>false</organismsDiffer>
    <experiments>4</experiments>
</comment>
<comment type="interaction">
    <interactant intactId="EBI-2266035">
        <id>Q05209</id>
    </interactant>
    <interactant intactId="EBI-641237">
        <id>P09619</id>
        <label>PDGFRB</label>
    </interactant>
    <organismsDiffer>false</organismsDiffer>
    <experiments>3</experiments>
</comment>
<comment type="interaction">
    <interactant intactId="EBI-2266035">
        <id>Q05209</id>
    </interactant>
    <interactant intactId="EBI-1050964">
        <id>O43586</id>
        <label>PSTPIP1</label>
    </interactant>
    <organismsDiffer>false</organismsDiffer>
    <experiments>6</experiments>
</comment>
<comment type="interaction">
    <interactant intactId="EBI-2266035">
        <id>Q05209</id>
    </interactant>
    <interactant intactId="EBI-78260">
        <id>P29350</id>
        <label>PTPN6</label>
    </interactant>
    <organismsDiffer>false</organismsDiffer>
    <experiments>3</experiments>
</comment>
<comment type="interaction">
    <interactant intactId="EBI-2266035">
        <id>Q05209</id>
    </interactant>
    <interactant intactId="EBI-702209">
        <id>P49023</id>
        <label>PXN</label>
    </interactant>
    <organismsDiffer>false</organismsDiffer>
    <experiments>4</experiments>
</comment>
<comment type="interaction">
    <interactant intactId="EBI-2266035">
        <id>Q05209</id>
    </interactant>
    <interactant intactId="EBI-78835">
        <id>P29353</id>
        <label>SHC1</label>
    </interactant>
    <organismsDiffer>false</organismsDiffer>
    <experiments>9</experiments>
</comment>
<comment type="interaction">
    <interactant intactId="EBI-2266035">
        <id>Q05209</id>
    </interactant>
    <interactant intactId="EBI-2257090">
        <id>Q02763</id>
        <label>TEK</label>
    </interactant>
    <organismsDiffer>false</organismsDiffer>
    <experiments>2</experiments>
</comment>
<comment type="subcellular location">
    <subcellularLocation>
        <location evidence="2">Cytoplasm</location>
    </subcellularLocation>
    <subcellularLocation>
        <location evidence="11">Cell junction</location>
        <location evidence="11">Focal adhesion</location>
    </subcellularLocation>
    <subcellularLocation>
        <location evidence="2">Cell projection</location>
        <location evidence="2">Podosome</location>
    </subcellularLocation>
    <text evidence="11">Partial translocation to focal adhesion sites may be mediated by interaction with SORBS2.</text>
</comment>
<comment type="alternative products">
    <event type="alternative splicing"/>
    <isoform>
        <id>Q05209-1</id>
        <name>1</name>
        <sequence type="displayed"/>
    </isoform>
    <isoform>
        <id>Q05209-2</id>
        <name>2</name>
        <sequence type="described" ref="VSP_046274"/>
    </isoform>
    <isoform>
        <id>Q05209-3</id>
        <name>3</name>
        <sequence type="described" ref="VSP_054168"/>
    </isoform>
</comment>
<comment type="PTM">
    <text evidence="9">Phosphorylated by STK24/MST3 and this results in inhibition of its activity.</text>
</comment>
<comment type="similarity">
    <text evidence="19">Belongs to the protein-tyrosine phosphatase family. Non-receptor class 4 subfamily.</text>
</comment>
<comment type="sequence caution" evidence="19">
    <conflict type="erroneous initiation">
        <sequence resource="EMBL-CDS" id="BAD92761"/>
    </conflict>
    <text>Extended N-terminus.</text>
</comment>
<feature type="chain" id="PRO_0000094771" description="Tyrosine-protein phosphatase non-receptor type 12">
    <location>
        <begin position="1"/>
        <end position="780"/>
    </location>
</feature>
<feature type="domain" description="Tyrosine-protein phosphatase" evidence="3">
    <location>
        <begin position="28"/>
        <end position="293"/>
    </location>
</feature>
<feature type="region of interest" description="Interaction with TGFB1I1" evidence="1">
    <location>
        <begin position="345"/>
        <end position="438"/>
    </location>
</feature>
<feature type="region of interest" description="Disordered" evidence="5">
    <location>
        <begin position="502"/>
        <end position="639"/>
    </location>
</feature>
<feature type="region of interest" description="Disordered" evidence="5">
    <location>
        <begin position="657"/>
        <end position="725"/>
    </location>
</feature>
<feature type="region of interest" description="Disordered" evidence="5">
    <location>
        <begin position="744"/>
        <end position="780"/>
    </location>
</feature>
<feature type="compositionally biased region" description="Polar residues" evidence="5">
    <location>
        <begin position="502"/>
        <end position="519"/>
    </location>
</feature>
<feature type="compositionally biased region" description="Basic and acidic residues" evidence="5">
    <location>
        <begin position="521"/>
        <end position="533"/>
    </location>
</feature>
<feature type="compositionally biased region" description="Polar residues" evidence="5">
    <location>
        <begin position="552"/>
        <end position="577"/>
    </location>
</feature>
<feature type="compositionally biased region" description="Polar residues" evidence="5">
    <location>
        <begin position="587"/>
        <end position="601"/>
    </location>
</feature>
<feature type="compositionally biased region" description="Basic and acidic residues" evidence="5">
    <location>
        <begin position="602"/>
        <end position="613"/>
    </location>
</feature>
<feature type="compositionally biased region" description="Low complexity" evidence="5">
    <location>
        <begin position="622"/>
        <end position="639"/>
    </location>
</feature>
<feature type="compositionally biased region" description="Polar residues" evidence="5">
    <location>
        <begin position="690"/>
        <end position="703"/>
    </location>
</feature>
<feature type="compositionally biased region" description="Basic and acidic residues" evidence="5">
    <location>
        <begin position="704"/>
        <end position="725"/>
    </location>
</feature>
<feature type="compositionally biased region" description="Basic and acidic residues" evidence="5">
    <location>
        <begin position="771"/>
        <end position="780"/>
    </location>
</feature>
<feature type="active site" description="Phosphocysteine intermediate" evidence="3 4">
    <location>
        <position position="231"/>
    </location>
</feature>
<feature type="binding site" evidence="20">
    <location>
        <position position="36"/>
    </location>
    <ligand>
        <name>substrate</name>
    </ligand>
</feature>
<feature type="binding site" evidence="20">
    <location>
        <begin position="63"/>
        <end position="67"/>
    </location>
    <ligand>
        <name>substrate</name>
    </ligand>
</feature>
<feature type="binding site" evidence="20">
    <location>
        <position position="199"/>
    </location>
    <ligand>
        <name>substrate</name>
    </ligand>
</feature>
<feature type="binding site" evidence="1">
    <location>
        <begin position="231"/>
        <end position="237"/>
    </location>
    <ligand>
        <name>substrate</name>
    </ligand>
</feature>
<feature type="binding site" evidence="20">
    <location>
        <position position="278"/>
    </location>
    <ligand>
        <name>substrate</name>
    </ligand>
</feature>
<feature type="modified residue" description="N-acetylmethionine" evidence="6 28 29">
    <location>
        <position position="1"/>
    </location>
</feature>
<feature type="modified residue" description="Phosphoserine" evidence="12 26 30">
    <location>
        <position position="19"/>
    </location>
</feature>
<feature type="modified residue" description="Phosphoserine" evidence="25 27 30 31">
    <location>
        <position position="332"/>
    </location>
</feature>
<feature type="modified residue" description="Phosphoserine" evidence="26 27 30">
    <location>
        <position position="435"/>
    </location>
</feature>
<feature type="modified residue" description="Phosphoserine" evidence="26 27 30">
    <location>
        <position position="449"/>
    </location>
</feature>
<feature type="modified residue" description="Phosphoserine" evidence="25">
    <location>
        <position position="468"/>
    </location>
</feature>
<feature type="modified residue" description="Phosphothreonine" evidence="30">
    <location>
        <position position="509"/>
    </location>
</feature>
<feature type="modified residue" description="Phosphothreonine" evidence="25">
    <location>
        <position position="519"/>
    </location>
</feature>
<feature type="modified residue" description="Phosphoserine" evidence="25">
    <location>
        <position position="567"/>
    </location>
</feature>
<feature type="modified residue" description="Phosphothreonine" evidence="25">
    <location>
        <position position="569"/>
    </location>
</feature>
<feature type="modified residue" description="Phosphoserine" evidence="25 30">
    <location>
        <position position="571"/>
    </location>
</feature>
<feature type="modified residue" description="Phosphoserine" evidence="2">
    <location>
        <position position="596"/>
    </location>
</feature>
<feature type="modified residue" description="Phosphothreonine" evidence="2">
    <location>
        <position position="598"/>
    </location>
</feature>
<feature type="modified residue" description="Phosphoserine" evidence="23 25 27">
    <location>
        <position position="603"/>
    </location>
</feature>
<feature type="modified residue" description="Phosphoserine" evidence="25 27 30 31">
    <location>
        <position position="606"/>
    </location>
</feature>
<feature type="modified residue" description="Phosphoserine" evidence="25">
    <location>
        <position position="608"/>
    </location>
</feature>
<feature type="modified residue" description="Phosphoserine" evidence="25">
    <location>
        <position position="613"/>
    </location>
</feature>
<feature type="modified residue" description="Phosphoserine" evidence="22 23 26 27 30 31">
    <location>
        <position position="673"/>
    </location>
</feature>
<feature type="modified residue" description="Phosphoserine" evidence="24 25">
    <location>
        <position position="689"/>
    </location>
</feature>
<feature type="modified residue" description="Phosphothreonine" evidence="24 25">
    <location>
        <position position="693"/>
    </location>
</feature>
<feature type="splice variant" id="VSP_046274" description="In isoform 2." evidence="17">
    <location>
        <begin position="1"/>
        <end position="130"/>
    </location>
</feature>
<feature type="splice variant" id="VSP_054168" description="In isoform 3." evidence="19">
    <location>
        <begin position="1"/>
        <end position="119"/>
    </location>
</feature>
<feature type="sequence variant" id="VAR_006385" description="In colon cancer; dbSNP:rs121434623." evidence="13">
    <original>K</original>
    <variation>R</variation>
    <location>
        <position position="61"/>
    </location>
</feature>
<feature type="sequence variant" id="VAR_019512" description="In dbSNP:rs9640663." evidence="7 8 16 25 30">
    <original>V</original>
    <variation>I</variation>
    <location>
        <position position="322"/>
    </location>
</feature>
<feature type="sequence variant" id="VAR_020297" description="In dbSNP:rs3750050." evidence="7">
    <original>T</original>
    <variation>A</variation>
    <location>
        <position position="573"/>
    </location>
</feature>
<feature type="sequence variant" id="VAR_057129" description="In dbSNP:rs2230602.">
    <original>E</original>
    <variation>K</variation>
    <location>
        <position position="706"/>
    </location>
</feature>
<feature type="mutagenesis site" description="Loss of phosphorylation site." evidence="12">
    <original>S</original>
    <variation>E</variation>
    <location>
        <position position="19"/>
    </location>
</feature>
<feature type="mutagenesis site" description="Decreases enzyme activity." evidence="12">
    <original>R</original>
    <variation>A</variation>
    <location>
        <position position="36"/>
    </location>
</feature>
<feature type="mutagenesis site" description="Decreases enzyme activity." evidence="12">
    <original>R</original>
    <variation>A</variation>
    <location>
        <position position="63"/>
    </location>
</feature>
<feature type="mutagenesis site" description="Abolishes enzyme activity." evidence="12">
    <original>Y</original>
    <variation>A</variation>
    <location>
        <position position="64"/>
    </location>
</feature>
<feature type="mutagenesis site" description="Abolishes enzyme activity." evidence="12">
    <original>D</original>
    <variation>A</variation>
    <location>
        <position position="66"/>
    </location>
</feature>
<feature type="mutagenesis site" description="Nearly abolishes enzyme activity." evidence="12">
    <original>I</original>
    <variation>A</variation>
    <location>
        <position position="67"/>
    </location>
</feature>
<feature type="mutagenesis site" description="Abolishes enzyme activity." evidence="12">
    <original>D</original>
    <variation>A</variation>
    <location>
        <position position="199"/>
    </location>
</feature>
<feature type="mutagenesis site" description="Decreases enzyme activity." evidence="12">
    <original>H</original>
    <variation>A</variation>
    <location>
        <position position="200"/>
    </location>
</feature>
<feature type="mutagenesis site" description="Decreases enzyme activity." evidence="12">
    <original>R</original>
    <variation>A</variation>
    <location>
        <position position="270"/>
    </location>
</feature>
<feature type="mutagenesis site" description="Nearly abolishes enzyme activity." evidence="12">
    <original>Q</original>
    <variation>A</variation>
    <location>
        <position position="278"/>
    </location>
</feature>
<feature type="sequence conflict" description="In Ref. 1; BAA02648 and 10; AAB30047." evidence="19" ref="1 10">
    <original>I</original>
    <variation>V</variation>
    <location>
        <position position="121"/>
    </location>
</feature>
<feature type="sequence conflict" description="In Ref. 4; BAG59344." evidence="19" ref="4">
    <original>N</original>
    <variation>D</variation>
    <location>
        <position position="612"/>
    </location>
</feature>
<feature type="helix" evidence="32">
    <location>
        <begin position="3"/>
        <end position="17"/>
    </location>
</feature>
<feature type="helix" evidence="32">
    <location>
        <begin position="27"/>
        <end position="42"/>
    </location>
</feature>
<feature type="turn" evidence="32">
    <location>
        <begin position="43"/>
        <end position="46"/>
    </location>
</feature>
<feature type="helix" evidence="32">
    <location>
        <begin position="51"/>
        <end position="54"/>
    </location>
</feature>
<feature type="helix" evidence="32">
    <location>
        <begin position="56"/>
        <end position="61"/>
    </location>
</feature>
<feature type="helix" evidence="32">
    <location>
        <begin position="71"/>
        <end position="73"/>
    </location>
</feature>
<feature type="strand" evidence="33">
    <location>
        <begin position="74"/>
        <end position="76"/>
    </location>
</feature>
<feature type="strand" evidence="32">
    <location>
        <begin position="90"/>
        <end position="94"/>
    </location>
</feature>
<feature type="strand" evidence="32">
    <location>
        <begin position="102"/>
        <end position="106"/>
    </location>
</feature>
<feature type="turn" evidence="32">
    <location>
        <begin position="111"/>
        <end position="113"/>
    </location>
</feature>
<feature type="helix" evidence="32">
    <location>
        <begin position="114"/>
        <end position="123"/>
    </location>
</feature>
<feature type="strand" evidence="32">
    <location>
        <begin position="128"/>
        <end position="131"/>
    </location>
</feature>
<feature type="strand" evidence="32">
    <location>
        <begin position="135"/>
        <end position="137"/>
    </location>
</feature>
<feature type="strand" evidence="32">
    <location>
        <begin position="155"/>
        <end position="157"/>
    </location>
</feature>
<feature type="strand" evidence="32">
    <location>
        <begin position="160"/>
        <end position="170"/>
    </location>
</feature>
<feature type="strand" evidence="32">
    <location>
        <begin position="173"/>
        <end position="182"/>
    </location>
</feature>
<feature type="strand" evidence="32">
    <location>
        <begin position="185"/>
        <end position="194"/>
    </location>
</feature>
<feature type="helix" evidence="32">
    <location>
        <begin position="207"/>
        <end position="219"/>
    </location>
</feature>
<feature type="strand" evidence="32">
    <location>
        <begin position="222"/>
        <end position="225"/>
    </location>
</feature>
<feature type="strand" evidence="32">
    <location>
        <begin position="227"/>
        <end position="230"/>
    </location>
</feature>
<feature type="strand" evidence="32">
    <location>
        <begin position="232"/>
        <end position="235"/>
    </location>
</feature>
<feature type="helix" evidence="32">
    <location>
        <begin position="236"/>
        <end position="252"/>
    </location>
</feature>
<feature type="helix" evidence="32">
    <location>
        <begin position="262"/>
        <end position="269"/>
    </location>
</feature>
<feature type="turn" evidence="32">
    <location>
        <begin position="270"/>
        <end position="272"/>
    </location>
</feature>
<feature type="helix" evidence="32">
    <location>
        <begin position="280"/>
        <end position="298"/>
    </location>
</feature>
<reference key="1">
    <citation type="journal article" date="1992" name="Biochem. Biophys. Res. Commun.">
        <title>Cloning and characterization of a human cDNA encoding a novel putative cytoplasmic protein-tyrosine-phosphatase.</title>
        <authorList>
            <person name="Takekawa M."/>
            <person name="Itoh F."/>
            <person name="Hinoda Y."/>
            <person name="Arimura Y."/>
            <person name="Toyota M."/>
            <person name="Sekiya M."/>
            <person name="Adachi M."/>
            <person name="Imai K."/>
            <person name="Yachi A."/>
        </authorList>
    </citation>
    <scope>NUCLEOTIDE SEQUENCE [MRNA] (ISOFORM 1)</scope>
    <scope>VARIANT ILE-322</scope>
    <source>
        <tissue>Colon</tissue>
    </source>
</reference>
<reference key="2">
    <citation type="journal article" date="1993" name="J. Biol. Chem.">
        <title>Cloning and expression of PTP-PEST. A novel, human, nontransmembrane protein tyrosine phosphatase.</title>
        <authorList>
            <person name="Yang Q."/>
            <person name="Co D."/>
            <person name="Sommercorn J."/>
            <person name="Tonks N.K."/>
        </authorList>
    </citation>
    <scope>NUCLEOTIDE SEQUENCE [MRNA] (ISOFORM 1)</scope>
    <scope>CATALYTIC ACTIVITY</scope>
</reference>
<reference key="3">
    <citation type="journal article" date="1993" name="J. Biol. Chem.">
        <authorList>
            <person name="Yang Q."/>
            <person name="Co D."/>
            <person name="Sommercorn J."/>
            <person name="Tonks N.K."/>
        </authorList>
    </citation>
    <scope>ERRATUM OF PUBMED:8454633</scope>
    <scope>SEQUENCE REVISION TO 495-517 AND 526-780</scope>
</reference>
<reference key="4">
    <citation type="journal article" date="2004" name="Nat. Genet.">
        <title>Complete sequencing and characterization of 21,243 full-length human cDNAs.</title>
        <authorList>
            <person name="Ota T."/>
            <person name="Suzuki Y."/>
            <person name="Nishikawa T."/>
            <person name="Otsuki T."/>
            <person name="Sugiyama T."/>
            <person name="Irie R."/>
            <person name="Wakamatsu A."/>
            <person name="Hayashi K."/>
            <person name="Sato H."/>
            <person name="Nagai K."/>
            <person name="Kimura K."/>
            <person name="Makita H."/>
            <person name="Sekine M."/>
            <person name="Obayashi M."/>
            <person name="Nishi T."/>
            <person name="Shibahara T."/>
            <person name="Tanaka T."/>
            <person name="Ishii S."/>
            <person name="Yamamoto J."/>
            <person name="Saito K."/>
            <person name="Kawai Y."/>
            <person name="Isono Y."/>
            <person name="Nakamura Y."/>
            <person name="Nagahari K."/>
            <person name="Murakami K."/>
            <person name="Yasuda T."/>
            <person name="Iwayanagi T."/>
            <person name="Wagatsuma M."/>
            <person name="Shiratori A."/>
            <person name="Sudo H."/>
            <person name="Hosoiri T."/>
            <person name="Kaku Y."/>
            <person name="Kodaira H."/>
            <person name="Kondo H."/>
            <person name="Sugawara M."/>
            <person name="Takahashi M."/>
            <person name="Kanda K."/>
            <person name="Yokoi T."/>
            <person name="Furuya T."/>
            <person name="Kikkawa E."/>
            <person name="Omura Y."/>
            <person name="Abe K."/>
            <person name="Kamihara K."/>
            <person name="Katsuta N."/>
            <person name="Sato K."/>
            <person name="Tanikawa M."/>
            <person name="Yamazaki M."/>
            <person name="Ninomiya K."/>
            <person name="Ishibashi T."/>
            <person name="Yamashita H."/>
            <person name="Murakawa K."/>
            <person name="Fujimori K."/>
            <person name="Tanai H."/>
            <person name="Kimata M."/>
            <person name="Watanabe M."/>
            <person name="Hiraoka S."/>
            <person name="Chiba Y."/>
            <person name="Ishida S."/>
            <person name="Ono Y."/>
            <person name="Takiguchi S."/>
            <person name="Watanabe S."/>
            <person name="Yosida M."/>
            <person name="Hotuta T."/>
            <person name="Kusano J."/>
            <person name="Kanehori K."/>
            <person name="Takahashi-Fujii A."/>
            <person name="Hara H."/>
            <person name="Tanase T.-O."/>
            <person name="Nomura Y."/>
            <person name="Togiya S."/>
            <person name="Komai F."/>
            <person name="Hara R."/>
            <person name="Takeuchi K."/>
            <person name="Arita M."/>
            <person name="Imose N."/>
            <person name="Musashino K."/>
            <person name="Yuuki H."/>
            <person name="Oshima A."/>
            <person name="Sasaki N."/>
            <person name="Aotsuka S."/>
            <person name="Yoshikawa Y."/>
            <person name="Matsunawa H."/>
            <person name="Ichihara T."/>
            <person name="Shiohata N."/>
            <person name="Sano S."/>
            <person name="Moriya S."/>
            <person name="Momiyama H."/>
            <person name="Satoh N."/>
            <person name="Takami S."/>
            <person name="Terashima Y."/>
            <person name="Suzuki O."/>
            <person name="Nakagawa S."/>
            <person name="Senoh A."/>
            <person name="Mizoguchi H."/>
            <person name="Goto Y."/>
            <person name="Shimizu F."/>
            <person name="Wakebe H."/>
            <person name="Hishigaki H."/>
            <person name="Watanabe T."/>
            <person name="Sugiyama A."/>
            <person name="Takemoto M."/>
            <person name="Kawakami B."/>
            <person name="Yamazaki M."/>
            <person name="Watanabe K."/>
            <person name="Kumagai A."/>
            <person name="Itakura S."/>
            <person name="Fukuzumi Y."/>
            <person name="Fujimori Y."/>
            <person name="Komiyama M."/>
            <person name="Tashiro H."/>
            <person name="Tanigami A."/>
            <person name="Fujiwara T."/>
            <person name="Ono T."/>
            <person name="Yamada K."/>
            <person name="Fujii Y."/>
            <person name="Ozaki K."/>
            <person name="Hirao M."/>
            <person name="Ohmori Y."/>
            <person name="Kawabata A."/>
            <person name="Hikiji T."/>
            <person name="Kobatake N."/>
            <person name="Inagaki H."/>
            <person name="Ikema Y."/>
            <person name="Okamoto S."/>
            <person name="Okitani R."/>
            <person name="Kawakami T."/>
            <person name="Noguchi S."/>
            <person name="Itoh T."/>
            <person name="Shigeta K."/>
            <person name="Senba T."/>
            <person name="Matsumura K."/>
            <person name="Nakajima Y."/>
            <person name="Mizuno T."/>
            <person name="Morinaga M."/>
            <person name="Sasaki M."/>
            <person name="Togashi T."/>
            <person name="Oyama M."/>
            <person name="Hata H."/>
            <person name="Watanabe M."/>
            <person name="Komatsu T."/>
            <person name="Mizushima-Sugano J."/>
            <person name="Satoh T."/>
            <person name="Shirai Y."/>
            <person name="Takahashi Y."/>
            <person name="Nakagawa K."/>
            <person name="Okumura K."/>
            <person name="Nagase T."/>
            <person name="Nomura N."/>
            <person name="Kikuchi H."/>
            <person name="Masuho Y."/>
            <person name="Yamashita R."/>
            <person name="Nakai K."/>
            <person name="Yada T."/>
            <person name="Nakamura Y."/>
            <person name="Ohara O."/>
            <person name="Isogai T."/>
            <person name="Sugano S."/>
        </authorList>
    </citation>
    <scope>NUCLEOTIDE SEQUENCE [LARGE SCALE MRNA] (ISOFORMS 1 AND 2)</scope>
    <scope>VARIANTS ILE-322 AND ALA-573</scope>
    <source>
        <tissue>Cerebellum</tissue>
        <tissue>Tongue</tissue>
    </source>
</reference>
<reference key="5">
    <citation type="submission" date="2005-03" db="EMBL/GenBank/DDBJ databases">
        <authorList>
            <person name="Totoki Y."/>
            <person name="Toyoda A."/>
            <person name="Takeda T."/>
            <person name="Sakaki Y."/>
            <person name="Tanaka A."/>
            <person name="Yokoyama S."/>
            <person name="Ohara O."/>
            <person name="Nagase T."/>
            <person name="Kikuno R.F."/>
        </authorList>
    </citation>
    <scope>NUCLEOTIDE SEQUENCE [LARGE SCALE MRNA] (ISOFORM 1)</scope>
    <scope>VARIANT ILE-322</scope>
    <source>
        <tissue>Brain</tissue>
    </source>
</reference>
<reference key="6">
    <citation type="journal article" date="2003" name="Nature">
        <title>The DNA sequence of human chromosome 7.</title>
        <authorList>
            <person name="Hillier L.W."/>
            <person name="Fulton R.S."/>
            <person name="Fulton L.A."/>
            <person name="Graves T.A."/>
            <person name="Pepin K.H."/>
            <person name="Wagner-McPherson C."/>
            <person name="Layman D."/>
            <person name="Maas J."/>
            <person name="Jaeger S."/>
            <person name="Walker R."/>
            <person name="Wylie K."/>
            <person name="Sekhon M."/>
            <person name="Becker M.C."/>
            <person name="O'Laughlin M.D."/>
            <person name="Schaller M.E."/>
            <person name="Fewell G.A."/>
            <person name="Delehaunty K.D."/>
            <person name="Miner T.L."/>
            <person name="Nash W.E."/>
            <person name="Cordes M."/>
            <person name="Du H."/>
            <person name="Sun H."/>
            <person name="Edwards J."/>
            <person name="Bradshaw-Cordum H."/>
            <person name="Ali J."/>
            <person name="Andrews S."/>
            <person name="Isak A."/>
            <person name="Vanbrunt A."/>
            <person name="Nguyen C."/>
            <person name="Du F."/>
            <person name="Lamar B."/>
            <person name="Courtney L."/>
            <person name="Kalicki J."/>
            <person name="Ozersky P."/>
            <person name="Bielicki L."/>
            <person name="Scott K."/>
            <person name="Holmes A."/>
            <person name="Harkins R."/>
            <person name="Harris A."/>
            <person name="Strong C.M."/>
            <person name="Hou S."/>
            <person name="Tomlinson C."/>
            <person name="Dauphin-Kohlberg S."/>
            <person name="Kozlowicz-Reilly A."/>
            <person name="Leonard S."/>
            <person name="Rohlfing T."/>
            <person name="Rock S.M."/>
            <person name="Tin-Wollam A.-M."/>
            <person name="Abbott A."/>
            <person name="Minx P."/>
            <person name="Maupin R."/>
            <person name="Strowmatt C."/>
            <person name="Latreille P."/>
            <person name="Miller N."/>
            <person name="Johnson D."/>
            <person name="Murray J."/>
            <person name="Woessner J.P."/>
            <person name="Wendl M.C."/>
            <person name="Yang S.-P."/>
            <person name="Schultz B.R."/>
            <person name="Wallis J.W."/>
            <person name="Spieth J."/>
            <person name="Bieri T.A."/>
            <person name="Nelson J.O."/>
            <person name="Berkowicz N."/>
            <person name="Wohldmann P.E."/>
            <person name="Cook L.L."/>
            <person name="Hickenbotham M.T."/>
            <person name="Eldred J."/>
            <person name="Williams D."/>
            <person name="Bedell J.A."/>
            <person name="Mardis E.R."/>
            <person name="Clifton S.W."/>
            <person name="Chissoe S.L."/>
            <person name="Marra M.A."/>
            <person name="Raymond C."/>
            <person name="Haugen E."/>
            <person name="Gillett W."/>
            <person name="Zhou Y."/>
            <person name="James R."/>
            <person name="Phelps K."/>
            <person name="Iadanoto S."/>
            <person name="Bubb K."/>
            <person name="Simms E."/>
            <person name="Levy R."/>
            <person name="Clendenning J."/>
            <person name="Kaul R."/>
            <person name="Kent W.J."/>
            <person name="Furey T.S."/>
            <person name="Baertsch R.A."/>
            <person name="Brent M.R."/>
            <person name="Keibler E."/>
            <person name="Flicek P."/>
            <person name="Bork P."/>
            <person name="Suyama M."/>
            <person name="Bailey J.A."/>
            <person name="Portnoy M.E."/>
            <person name="Torrents D."/>
            <person name="Chinwalla A.T."/>
            <person name="Gish W.R."/>
            <person name="Eddy S.R."/>
            <person name="McPherson J.D."/>
            <person name="Olson M.V."/>
            <person name="Eichler E.E."/>
            <person name="Green E.D."/>
            <person name="Waterston R.H."/>
            <person name="Wilson R.K."/>
        </authorList>
    </citation>
    <scope>NUCLEOTIDE SEQUENCE [LARGE SCALE GENOMIC DNA]</scope>
</reference>
<reference key="7">
    <citation type="submission" date="2005-09" db="EMBL/GenBank/DDBJ databases">
        <authorList>
            <person name="Mural R.J."/>
            <person name="Istrail S."/>
            <person name="Sutton G.G."/>
            <person name="Florea L."/>
            <person name="Halpern A.L."/>
            <person name="Mobarry C.M."/>
            <person name="Lippert R."/>
            <person name="Walenz B."/>
            <person name="Shatkay H."/>
            <person name="Dew I."/>
            <person name="Miller J.R."/>
            <person name="Flanigan M.J."/>
            <person name="Edwards N.J."/>
            <person name="Bolanos R."/>
            <person name="Fasulo D."/>
            <person name="Halldorsson B.V."/>
            <person name="Hannenhalli S."/>
            <person name="Turner R."/>
            <person name="Yooseph S."/>
            <person name="Lu F."/>
            <person name="Nusskern D.R."/>
            <person name="Shue B.C."/>
            <person name="Zheng X.H."/>
            <person name="Zhong F."/>
            <person name="Delcher A.L."/>
            <person name="Huson D.H."/>
            <person name="Kravitz S.A."/>
            <person name="Mouchard L."/>
            <person name="Reinert K."/>
            <person name="Remington K.A."/>
            <person name="Clark A.G."/>
            <person name="Waterman M.S."/>
            <person name="Eichler E.E."/>
            <person name="Adams M.D."/>
            <person name="Hunkapiller M.W."/>
            <person name="Myers E.W."/>
            <person name="Venter J.C."/>
        </authorList>
    </citation>
    <scope>NUCLEOTIDE SEQUENCE [LARGE SCALE GENOMIC DNA]</scope>
</reference>
<reference key="8">
    <citation type="journal article" date="2004" name="Genome Res.">
        <title>The status, quality, and expansion of the NIH full-length cDNA project: the Mammalian Gene Collection (MGC).</title>
        <authorList>
            <consortium name="The MGC Project Team"/>
        </authorList>
    </citation>
    <scope>NUCLEOTIDE SEQUENCE [LARGE SCALE MRNA] (ISOFORM 1)</scope>
    <source>
        <tissue>Testis</tissue>
    </source>
</reference>
<reference key="9">
    <citation type="journal article" date="2003" name="Nat. Biotechnol.">
        <title>Exploring proteomes and analyzing protein processing by mass spectrometric identification of sorted N-terminal peptides.</title>
        <authorList>
            <person name="Gevaert K."/>
            <person name="Goethals M."/>
            <person name="Martens L."/>
            <person name="Van Damme J."/>
            <person name="Staes A."/>
            <person name="Thomas G.R."/>
            <person name="Vandekerckhove J."/>
        </authorList>
    </citation>
    <scope>PROTEIN SEQUENCE OF 1-8</scope>
    <scope>ACETYLATION AT MET-1</scope>
    <source>
        <tissue>Platelet</tissue>
    </source>
</reference>
<reference key="10">
    <citation type="journal article" date="1994" name="FEBS Lett.">
        <title>Chromosomal localization of the protein tyrosine phosphatase G1 gene and characterization of the aberrant transcripts in human colon cancer cells.</title>
        <authorList>
            <person name="Takekawa M."/>
            <person name="Itoh F."/>
            <person name="Hinoda Y."/>
            <person name="Adachi M."/>
            <person name="Ariyama T."/>
            <person name="Inazawa J."/>
            <person name="Imai K."/>
            <person name="Yachi A."/>
        </authorList>
    </citation>
    <scope>NUCLEOTIDE SEQUENCE [MRNA] OF 59-136 (ISOFORM 1)</scope>
    <scope>VARIANT COLON CANCER ARG-61</scope>
</reference>
<reference key="11">
    <citation type="journal article" date="1998" name="EMBO J.">
        <title>A cdc15-like adaptor protein (CD2BP1) interacts with the CD2 cytoplasmic domain and regulates CD2-triggered adhesion.</title>
        <authorList>
            <person name="Li J."/>
            <person name="Nishizawa K."/>
            <person name="An W."/>
            <person name="Hussey R.E."/>
            <person name="Lialios F.E."/>
            <person name="Salgia R."/>
            <person name="Sunder-Plassmann R."/>
            <person name="Reinherz E.L."/>
        </authorList>
    </citation>
    <scope>INTERACTION WITH PSTPIP1</scope>
</reference>
<reference key="12">
    <citation type="journal article" date="2006" name="J. Biol. Chem.">
        <title>Inhibition of cell migration by autophosphorylated mammalian sterile 20-like kinase 3 (MST3) involves paxillin and protein-tyrosine phosphatase-PEST.</title>
        <authorList>
            <person name="Lu T.J."/>
            <person name="Lai W.Y."/>
            <person name="Huang C.Y."/>
            <person name="Hsieh W.J."/>
            <person name="Yu J.S."/>
            <person name="Hsieh Y.J."/>
            <person name="Chang W.T."/>
            <person name="Leu T.H."/>
            <person name="Chang W.C."/>
            <person name="Chuang W.J."/>
            <person name="Tang M.J."/>
            <person name="Chen T.Y."/>
            <person name="Lu T.L."/>
            <person name="Lai M.D."/>
        </authorList>
    </citation>
    <scope>PHOSPHORYLATION BY STK24</scope>
</reference>
<reference key="13">
    <citation type="journal article" date="2006" name="Nat. Biotechnol.">
        <title>A probability-based approach for high-throughput protein phosphorylation analysis and site localization.</title>
        <authorList>
            <person name="Beausoleil S.A."/>
            <person name="Villen J."/>
            <person name="Gerber S.A."/>
            <person name="Rush J."/>
            <person name="Gygi S.P."/>
        </authorList>
    </citation>
    <scope>PHOSPHORYLATION [LARGE SCALE ANALYSIS] AT SER-673</scope>
    <scope>IDENTIFICATION BY MASS SPECTROMETRY [LARGE SCALE ANALYSIS]</scope>
    <source>
        <tissue>Cervix carcinoma</tissue>
    </source>
</reference>
<reference key="14">
    <citation type="journal article" date="2007" name="Am. J. Physiol.">
        <title>Interaction of Pyk2 and PTP-PEST with leupaxin in prostate cancer cells.</title>
        <authorList>
            <person name="Sahu S.N."/>
            <person name="Nunez S."/>
            <person name="Bai G."/>
            <person name="Gupta A."/>
        </authorList>
    </citation>
    <scope>INTERACTION WITH PTK2B/PYK2</scope>
    <scope>FUNCTION</scope>
</reference>
<reference key="15">
    <citation type="journal article" date="2008" name="Cancer Res.">
        <title>ArgBP2-dependent signaling regulates pancreatic cell migration, adhesion, and tumorigenicity.</title>
        <authorList>
            <person name="Taieb D."/>
            <person name="Roignot J."/>
            <person name="Andre F."/>
            <person name="Garcia S."/>
            <person name="Masson B."/>
            <person name="Pierres A."/>
            <person name="Iovanna J.L."/>
            <person name="Soubeyran P."/>
        </authorList>
    </citation>
    <scope>INTERACTION WITH SORBS2</scope>
    <scope>SUBCELLULAR LOCATION</scope>
    <scope>FUNCTION</scope>
</reference>
<reference key="16">
    <citation type="journal article" date="2008" name="J. Proteome Res.">
        <title>Combining protein-based IMAC, peptide-based IMAC, and MudPIT for efficient phosphoproteomic analysis.</title>
        <authorList>
            <person name="Cantin G.T."/>
            <person name="Yi W."/>
            <person name="Lu B."/>
            <person name="Park S.K."/>
            <person name="Xu T."/>
            <person name="Lee J.-D."/>
            <person name="Yates J.R. III"/>
        </authorList>
    </citation>
    <scope>PHOSPHORYLATION [LARGE SCALE ANALYSIS] AT SER-689 AND THR-693</scope>
    <scope>IDENTIFICATION BY MASS SPECTROMETRY [LARGE SCALE ANALYSIS]</scope>
    <source>
        <tissue>Cervix carcinoma</tissue>
    </source>
</reference>
<reference key="17">
    <citation type="journal article" date="2008" name="J. Proteome Res.">
        <title>Phosphoproteome of resting human platelets.</title>
        <authorList>
            <person name="Zahedi R.P."/>
            <person name="Lewandrowski U."/>
            <person name="Wiesner J."/>
            <person name="Wortelkamp S."/>
            <person name="Moebius J."/>
            <person name="Schuetz C."/>
            <person name="Walter U."/>
            <person name="Gambaryan S."/>
            <person name="Sickmann A."/>
        </authorList>
    </citation>
    <scope>PHOSPHORYLATION [LARGE SCALE ANALYSIS] AT SER-603 AND SER-673</scope>
    <scope>IDENTIFICATION BY MASS SPECTROMETRY [LARGE SCALE ANALYSIS]</scope>
    <source>
        <tissue>Platelet</tissue>
    </source>
</reference>
<reference key="18">
    <citation type="journal article" date="2008" name="Proc. Natl. Acad. Sci. U.S.A.">
        <title>A quantitative atlas of mitotic phosphorylation.</title>
        <authorList>
            <person name="Dephoure N."/>
            <person name="Zhou C."/>
            <person name="Villen J."/>
            <person name="Beausoleil S.A."/>
            <person name="Bakalarski C.E."/>
            <person name="Elledge S.J."/>
            <person name="Gygi S.P."/>
        </authorList>
    </citation>
    <scope>PHOSPHORYLATION [LARGE SCALE ANALYSIS] AT SER-332; SER-468; THR-519; SER-567; THR-569; SER-571; SER-603; SER-606; SER-608; SER-613; SER-689 AND THR-693</scope>
    <scope>VARIANT [LARGE SCALE ANALYSIS] ILE-322</scope>
    <scope>IDENTIFICATION BY MASS SPECTROMETRY [LARGE SCALE ANALYSIS]</scope>
    <source>
        <tissue>Cervix carcinoma</tissue>
    </source>
</reference>
<reference key="19">
    <citation type="journal article" date="2010" name="Sci. Signal.">
        <title>Quantitative phosphoproteomics reveals widespread full phosphorylation site occupancy during mitosis.</title>
        <authorList>
            <person name="Olsen J.V."/>
            <person name="Vermeulen M."/>
            <person name="Santamaria A."/>
            <person name="Kumar C."/>
            <person name="Miller M.L."/>
            <person name="Jensen L.J."/>
            <person name="Gnad F."/>
            <person name="Cox J."/>
            <person name="Jensen T.S."/>
            <person name="Nigg E.A."/>
            <person name="Brunak S."/>
            <person name="Mann M."/>
        </authorList>
    </citation>
    <scope>PHOSPHORYLATION [LARGE SCALE ANALYSIS] AT SER-19; SER-435; SER-449 AND SER-673</scope>
    <scope>IDENTIFICATION BY MASS SPECTROMETRY [LARGE SCALE ANALYSIS]</scope>
    <source>
        <tissue>Cervix carcinoma</tissue>
    </source>
</reference>
<reference key="20">
    <citation type="journal article" date="2011" name="BMC Syst. Biol.">
        <title>Initial characterization of the human central proteome.</title>
        <authorList>
            <person name="Burkard T.R."/>
            <person name="Planyavsky M."/>
            <person name="Kaupe I."/>
            <person name="Breitwieser F.P."/>
            <person name="Buerckstuemmer T."/>
            <person name="Bennett K.L."/>
            <person name="Superti-Furga G."/>
            <person name="Colinge J."/>
        </authorList>
    </citation>
    <scope>IDENTIFICATION BY MASS SPECTROMETRY [LARGE SCALE ANALYSIS]</scope>
</reference>
<reference key="21">
    <citation type="journal article" date="2011" name="Sci. Signal.">
        <title>System-wide temporal characterization of the proteome and phosphoproteome of human embryonic stem cell differentiation.</title>
        <authorList>
            <person name="Rigbolt K.T."/>
            <person name="Prokhorova T.A."/>
            <person name="Akimov V."/>
            <person name="Henningsen J."/>
            <person name="Johansen P.T."/>
            <person name="Kratchmarova I."/>
            <person name="Kassem M."/>
            <person name="Mann M."/>
            <person name="Olsen J.V."/>
            <person name="Blagoev B."/>
        </authorList>
    </citation>
    <scope>PHOSPHORYLATION [LARGE SCALE ANALYSIS] AT SER-332; SER-435; SER-449; SER-603; SER-606 AND SER-673</scope>
    <scope>IDENTIFICATION BY MASS SPECTROMETRY [LARGE SCALE ANALYSIS]</scope>
</reference>
<reference key="22">
    <citation type="journal article" date="2012" name="Mol. Cell. Proteomics">
        <title>Comparative large-scale characterisation of plant vs. mammal proteins reveals similar and idiosyncratic N-alpha acetylation features.</title>
        <authorList>
            <person name="Bienvenut W.V."/>
            <person name="Sumpton D."/>
            <person name="Martinez A."/>
            <person name="Lilla S."/>
            <person name="Espagne C."/>
            <person name="Meinnel T."/>
            <person name="Giglione C."/>
        </authorList>
    </citation>
    <scope>ACETYLATION [LARGE SCALE ANALYSIS] AT MET-1</scope>
    <scope>IDENTIFICATION BY MASS SPECTROMETRY [LARGE SCALE ANALYSIS]</scope>
</reference>
<reference key="23">
    <citation type="journal article" date="2012" name="Proc. Natl. Acad. Sci. U.S.A.">
        <title>N-terminal acetylome analyses and functional insights of the N-terminal acetyltransferase NatB.</title>
        <authorList>
            <person name="Van Damme P."/>
            <person name="Lasa M."/>
            <person name="Polevoda B."/>
            <person name="Gazquez C."/>
            <person name="Elosegui-Artola A."/>
            <person name="Kim D.S."/>
            <person name="De Juan-Pardo E."/>
            <person name="Demeyer K."/>
            <person name="Hole K."/>
            <person name="Larrea E."/>
            <person name="Timmerman E."/>
            <person name="Prieto J."/>
            <person name="Arnesen T."/>
            <person name="Sherman F."/>
            <person name="Gevaert K."/>
            <person name="Aldabe R."/>
        </authorList>
    </citation>
    <scope>ACETYLATION [LARGE SCALE ANALYSIS] AT MET-1</scope>
    <scope>IDENTIFICATION BY MASS SPECTROMETRY [LARGE SCALE ANALYSIS]</scope>
</reference>
<reference key="24">
    <citation type="journal article" date="2013" name="J. Proteome Res.">
        <title>Toward a comprehensive characterization of a human cancer cell phosphoproteome.</title>
        <authorList>
            <person name="Zhou H."/>
            <person name="Di Palma S."/>
            <person name="Preisinger C."/>
            <person name="Peng M."/>
            <person name="Polat A.N."/>
            <person name="Heck A.J."/>
            <person name="Mohammed S."/>
        </authorList>
    </citation>
    <scope>PHOSPHORYLATION [LARGE SCALE ANALYSIS] AT SER-19; SER-332; SER-435; SER-449; THR-509; SER-571; SER-606 AND SER-673</scope>
    <scope>VARIANT [LARGE SCALE ANALYSIS] ILE-322</scope>
    <scope>IDENTIFICATION BY MASS SPECTROMETRY [LARGE SCALE ANALYSIS]</scope>
    <source>
        <tissue>Cervix carcinoma</tissue>
        <tissue>Erythroleukemia</tissue>
    </source>
</reference>
<reference key="25">
    <citation type="journal article" date="2014" name="J. Proteomics">
        <title>An enzyme assisted RP-RPLC approach for in-depth analysis of human liver phosphoproteome.</title>
        <authorList>
            <person name="Bian Y."/>
            <person name="Song C."/>
            <person name="Cheng K."/>
            <person name="Dong M."/>
            <person name="Wang F."/>
            <person name="Huang J."/>
            <person name="Sun D."/>
            <person name="Wang L."/>
            <person name="Ye M."/>
            <person name="Zou H."/>
        </authorList>
    </citation>
    <scope>PHOSPHORYLATION [LARGE SCALE ANALYSIS] AT SER-332; SER-606 AND SER-673</scope>
    <scope>IDENTIFICATION BY MASS SPECTROMETRY [LARGE SCALE ANALYSIS]</scope>
    <source>
        <tissue>Liver</tissue>
    </source>
</reference>
<reference evidence="21" key="26">
    <citation type="journal article" date="2016" name="Cell Rep.">
        <title>Crystal structure and substrate specificity of PTPN12.</title>
        <authorList>
            <person name="Li H."/>
            <person name="Yang F."/>
            <person name="Liu C."/>
            <person name="Xiao P."/>
            <person name="Xu Y."/>
            <person name="Liang Z."/>
            <person name="Liu C."/>
            <person name="Wang H."/>
            <person name="Wang W."/>
            <person name="Zheng W."/>
            <person name="Zhang W."/>
            <person name="Ma X."/>
            <person name="He D."/>
            <person name="Song X."/>
            <person name="Cui F."/>
            <person name="Xu Z."/>
            <person name="Yi F."/>
            <person name="Sun J.P."/>
            <person name="Yu X."/>
        </authorList>
    </citation>
    <scope>X-RAY CRYSTALLOGRAPHY (2.04 ANGSTROMS) OF 1-305</scope>
    <scope>FUNCTION</scope>
    <scope>CATALYTIC ACTIVITY</scope>
    <scope>MUTAGENESIS OF SER-19; ARG-36; ARG-63; TYR-64; ASP-66; ASP-199; HIS-200; ARG-270 AND GLN-278</scope>
    <scope>PHOSPHORYLATION AT SER-19</scope>
</reference>
<keyword id="KW-0002">3D-structure</keyword>
<keyword id="KW-0007">Acetylation</keyword>
<keyword id="KW-0025">Alternative splicing</keyword>
<keyword id="KW-0965">Cell junction</keyword>
<keyword id="KW-0966">Cell projection</keyword>
<keyword id="KW-0963">Cytoplasm</keyword>
<keyword id="KW-0903">Direct protein sequencing</keyword>
<keyword id="KW-0378">Hydrolase</keyword>
<keyword id="KW-0597">Phosphoprotein</keyword>
<keyword id="KW-0904">Protein phosphatase</keyword>
<keyword id="KW-1267">Proteomics identification</keyword>
<keyword id="KW-1185">Reference proteome</keyword>
<sequence>MEQVEILRKFIQRVQAMKSPDHNGEDNFARDFMRLRRLSTKYRTEKIYPTATGEKEENVKKNRYKDILPFDHSRVKLTLKTPSQDSDYINANFIKGVYGPKAYVATQGPLANTVIDFWRMIWEYNVVIIVMACREFEMGRKKCERYWPLYGEDPITFAPFKISCEDEQARTDYFIRTLLLEFQNESRRLYQFHYVNWPDHDVPSSFDSILDMISLMRKYQEHEDVPICIHCSAGCGRTGAICAIDYTWNLLKAGKIPEEFNVFNLIQEMRTQRHSAVQTKEQYELVHRAIAQLFEKQLQLYEIHGAQKIADGVNEINTENMVSSIEPEKQDSPPPKPPRTRSCLVEGDAKEEILQPPEPHPVPPILTPSPPSAFPTVTTVWQDNDRYHPKPVLHMVSSEQHSADLNRNYSKSTELPGKNESTIEQIDKKLERNLSFEIKKVPLQEGPKSFDGNTLLNRGHAIKIKSASPCIADKISKPQELSSDLNVGDTSQNSCVDCSVTQSNKVSVTPPEESQNSDTPPRPDRLPLDEKGHVTWSFHGPENAIPIPDLSEGNSSDINYQTRKTVSLTPSPTTQVETPDLVDHDNTSPLFRTPLSFTNPLHSDDSDSDERNSDGAVTQNKTNISTASATVSAATSTESISTRKVLPMSIARHNIAGTTHSGAEKDVDVSEDSPPPLPERTPESFVLASEHNTPVRSEWSELQSQERSEQKKSEGLITSENEKCDHPAGGIHYEMCIECPPTFSDKREQISENPTEATDIGFGNRCGKPKGPRDPPSEWT</sequence>
<evidence type="ECO:0000250" key="1"/>
<evidence type="ECO:0000250" key="2">
    <source>
        <dbReference type="UniProtKB" id="P35831"/>
    </source>
</evidence>
<evidence type="ECO:0000255" key="3">
    <source>
        <dbReference type="PROSITE-ProRule" id="PRU00160"/>
    </source>
</evidence>
<evidence type="ECO:0000255" key="4">
    <source>
        <dbReference type="PROSITE-ProRule" id="PRU10044"/>
    </source>
</evidence>
<evidence type="ECO:0000256" key="5">
    <source>
        <dbReference type="SAM" id="MobiDB-lite"/>
    </source>
</evidence>
<evidence type="ECO:0000269" key="6">
    <source>
    </source>
</evidence>
<evidence type="ECO:0000269" key="7">
    <source>
    </source>
</evidence>
<evidence type="ECO:0000269" key="8">
    <source>
    </source>
</evidence>
<evidence type="ECO:0000269" key="9">
    <source>
    </source>
</evidence>
<evidence type="ECO:0000269" key="10">
    <source>
    </source>
</evidence>
<evidence type="ECO:0000269" key="11">
    <source>
    </source>
</evidence>
<evidence type="ECO:0000269" key="12">
    <source>
    </source>
</evidence>
<evidence type="ECO:0000269" key="13">
    <source>
    </source>
</evidence>
<evidence type="ECO:0000269" key="14">
    <source>
    </source>
</evidence>
<evidence type="ECO:0000269" key="15">
    <source>
    </source>
</evidence>
<evidence type="ECO:0000269" key="16">
    <source ref="5"/>
</evidence>
<evidence type="ECO:0000303" key="17">
    <source>
    </source>
</evidence>
<evidence type="ECO:0000303" key="18">
    <source>
    </source>
</evidence>
<evidence type="ECO:0000305" key="19"/>
<evidence type="ECO:0000305" key="20">
    <source>
    </source>
</evidence>
<evidence type="ECO:0007744" key="21">
    <source>
        <dbReference type="PDB" id="5J8R"/>
    </source>
</evidence>
<evidence type="ECO:0007744" key="22">
    <source>
    </source>
</evidence>
<evidence type="ECO:0007744" key="23">
    <source>
    </source>
</evidence>
<evidence type="ECO:0007744" key="24">
    <source>
    </source>
</evidence>
<evidence type="ECO:0007744" key="25">
    <source>
    </source>
</evidence>
<evidence type="ECO:0007744" key="26">
    <source>
    </source>
</evidence>
<evidence type="ECO:0007744" key="27">
    <source>
    </source>
</evidence>
<evidence type="ECO:0007744" key="28">
    <source>
    </source>
</evidence>
<evidence type="ECO:0007744" key="29">
    <source>
    </source>
</evidence>
<evidence type="ECO:0007744" key="30">
    <source>
    </source>
</evidence>
<evidence type="ECO:0007744" key="31">
    <source>
    </source>
</evidence>
<evidence type="ECO:0007829" key="32">
    <source>
        <dbReference type="PDB" id="5HDE"/>
    </source>
</evidence>
<evidence type="ECO:0007829" key="33">
    <source>
        <dbReference type="PDB" id="5J8R"/>
    </source>
</evidence>
<proteinExistence type="evidence at protein level"/>
<dbReference type="EC" id="3.1.3.48" evidence="12 14"/>
<dbReference type="EMBL" id="D13380">
    <property type="protein sequence ID" value="BAA02648.1"/>
    <property type="molecule type" value="mRNA"/>
</dbReference>
<dbReference type="EMBL" id="M93425">
    <property type="protein sequence ID" value="AAA36529.1"/>
    <property type="molecule type" value="mRNA"/>
</dbReference>
<dbReference type="EMBL" id="AK289573">
    <property type="protein sequence ID" value="BAF82262.1"/>
    <property type="molecule type" value="mRNA"/>
</dbReference>
<dbReference type="EMBL" id="AK296764">
    <property type="protein sequence ID" value="BAG59344.1"/>
    <property type="molecule type" value="mRNA"/>
</dbReference>
<dbReference type="EMBL" id="AB209524">
    <property type="protein sequence ID" value="BAD92761.1"/>
    <property type="status" value="ALT_INIT"/>
    <property type="molecule type" value="mRNA"/>
</dbReference>
<dbReference type="EMBL" id="AC006451">
    <property type="protein sequence ID" value="AAQ96881.1"/>
    <property type="molecule type" value="Genomic_DNA"/>
</dbReference>
<dbReference type="EMBL" id="CH236949">
    <property type="protein sequence ID" value="EAL24198.1"/>
    <property type="molecule type" value="Genomic_DNA"/>
</dbReference>
<dbReference type="EMBL" id="CH471091">
    <property type="protein sequence ID" value="EAW77036.1"/>
    <property type="molecule type" value="Genomic_DNA"/>
</dbReference>
<dbReference type="EMBL" id="CH471091">
    <property type="protein sequence ID" value="EAW77037.1"/>
    <property type="molecule type" value="Genomic_DNA"/>
</dbReference>
<dbReference type="EMBL" id="BC050008">
    <property type="protein sequence ID" value="AAH50008.2"/>
    <property type="molecule type" value="mRNA"/>
</dbReference>
<dbReference type="EMBL" id="S69184">
    <property type="protein sequence ID" value="AAB30047.2"/>
    <property type="molecule type" value="mRNA"/>
</dbReference>
<dbReference type="CCDS" id="CCDS47619.1">
    <molecule id="Q05209-3"/>
</dbReference>
<dbReference type="CCDS" id="CCDS47620.1">
    <molecule id="Q05209-2"/>
</dbReference>
<dbReference type="CCDS" id="CCDS5592.1">
    <molecule id="Q05209-1"/>
</dbReference>
<dbReference type="PIR" id="JC1368">
    <property type="entry name" value="JC1368"/>
</dbReference>
<dbReference type="RefSeq" id="NP_001124480.1">
    <molecule id="Q05209-3"/>
    <property type="nucleotide sequence ID" value="NM_001131008.2"/>
</dbReference>
<dbReference type="RefSeq" id="NP_001124481.1">
    <molecule id="Q05209-2"/>
    <property type="nucleotide sequence ID" value="NM_001131009.2"/>
</dbReference>
<dbReference type="RefSeq" id="NP_002826.3">
    <molecule id="Q05209-1"/>
    <property type="nucleotide sequence ID" value="NM_002835.3"/>
</dbReference>
<dbReference type="RefSeq" id="XP_047276632.1">
    <molecule id="Q05209-3"/>
    <property type="nucleotide sequence ID" value="XM_047420676.1"/>
</dbReference>
<dbReference type="PDB" id="5HDE">
    <property type="method" value="X-ray"/>
    <property type="resolution" value="1.62 A"/>
    <property type="chains" value="A=1-301"/>
</dbReference>
<dbReference type="PDB" id="5J8R">
    <property type="method" value="X-ray"/>
    <property type="resolution" value="2.04 A"/>
    <property type="chains" value="A/B/C/D=1-305"/>
</dbReference>
<dbReference type="PDB" id="5O2P">
    <property type="method" value="NMR"/>
    <property type="chains" value="A=328-344"/>
</dbReference>
<dbReference type="PDBsum" id="5HDE"/>
<dbReference type="PDBsum" id="5J8R"/>
<dbReference type="PDBsum" id="5O2P"/>
<dbReference type="SMR" id="Q05209"/>
<dbReference type="BioGRID" id="111746">
    <property type="interactions" value="137"/>
</dbReference>
<dbReference type="FunCoup" id="Q05209">
    <property type="interactions" value="4785"/>
</dbReference>
<dbReference type="IntAct" id="Q05209">
    <property type="interactions" value="108"/>
</dbReference>
<dbReference type="MINT" id="Q05209"/>
<dbReference type="STRING" id="9606.ENSP00000248594"/>
<dbReference type="BindingDB" id="Q05209"/>
<dbReference type="ChEMBL" id="CHEMBL3236"/>
<dbReference type="DrugBank" id="DB01133">
    <property type="generic name" value="Tiludronic acid"/>
</dbReference>
<dbReference type="DEPOD" id="PTPN12"/>
<dbReference type="GlyGen" id="Q05209">
    <property type="glycosylation" value="14 sites, 2 N-linked glycans (2 sites), 1 O-linked glycan (12 sites)"/>
</dbReference>
<dbReference type="iPTMnet" id="Q05209"/>
<dbReference type="PhosphoSitePlus" id="Q05209"/>
<dbReference type="SwissPalm" id="Q05209"/>
<dbReference type="BioMuta" id="PTPN12"/>
<dbReference type="DMDM" id="317373522"/>
<dbReference type="jPOST" id="Q05209"/>
<dbReference type="MassIVE" id="Q05209"/>
<dbReference type="PaxDb" id="9606-ENSP00000248594"/>
<dbReference type="PeptideAtlas" id="Q05209"/>
<dbReference type="ProteomicsDB" id="19279"/>
<dbReference type="ProteomicsDB" id="19894"/>
<dbReference type="ProteomicsDB" id="58316">
    <molecule id="Q05209-1"/>
</dbReference>
<dbReference type="Pumba" id="Q05209"/>
<dbReference type="Antibodypedia" id="2052">
    <property type="antibodies" value="218 antibodies from 33 providers"/>
</dbReference>
<dbReference type="DNASU" id="5782"/>
<dbReference type="Ensembl" id="ENST00000248594.11">
    <molecule id="Q05209-1"/>
    <property type="protein sequence ID" value="ENSP00000248594.6"/>
    <property type="gene ID" value="ENSG00000127947.16"/>
</dbReference>
<dbReference type="Ensembl" id="ENST00000415482.6">
    <molecule id="Q05209-3"/>
    <property type="protein sequence ID" value="ENSP00000392429.2"/>
    <property type="gene ID" value="ENSG00000127947.16"/>
</dbReference>
<dbReference type="Ensembl" id="ENST00000435495.6">
    <molecule id="Q05209-2"/>
    <property type="protein sequence ID" value="ENSP00000397991.2"/>
    <property type="gene ID" value="ENSG00000127947.16"/>
</dbReference>
<dbReference type="GeneID" id="5782"/>
<dbReference type="KEGG" id="hsa:5782"/>
<dbReference type="MANE-Select" id="ENST00000248594.11">
    <property type="protein sequence ID" value="ENSP00000248594.6"/>
    <property type="RefSeq nucleotide sequence ID" value="NM_002835.4"/>
    <property type="RefSeq protein sequence ID" value="NP_002826.3"/>
</dbReference>
<dbReference type="UCSC" id="uc003ugh.3">
    <molecule id="Q05209-1"/>
    <property type="organism name" value="human"/>
</dbReference>
<dbReference type="AGR" id="HGNC:9645"/>
<dbReference type="CTD" id="5782"/>
<dbReference type="DisGeNET" id="5782"/>
<dbReference type="GeneCards" id="PTPN12"/>
<dbReference type="HGNC" id="HGNC:9645">
    <property type="gene designation" value="PTPN12"/>
</dbReference>
<dbReference type="HPA" id="ENSG00000127947">
    <property type="expression patterns" value="Low tissue specificity"/>
</dbReference>
<dbReference type="MalaCards" id="PTPN12"/>
<dbReference type="MIM" id="600079">
    <property type="type" value="gene"/>
</dbReference>
<dbReference type="neXtProt" id="NX_Q05209"/>
<dbReference type="OpenTargets" id="ENSG00000127947"/>
<dbReference type="PharmGKB" id="PA33987"/>
<dbReference type="VEuPathDB" id="HostDB:ENSG00000127947"/>
<dbReference type="eggNOG" id="KOG0789">
    <property type="taxonomic scope" value="Eukaryota"/>
</dbReference>
<dbReference type="GeneTree" id="ENSGT00940000156909"/>
<dbReference type="HOGENOM" id="CLU_015557_2_0_1"/>
<dbReference type="InParanoid" id="Q05209"/>
<dbReference type="OMA" id="PCIIDKI"/>
<dbReference type="OrthoDB" id="10253954at2759"/>
<dbReference type="PAN-GO" id="Q05209">
    <property type="GO annotations" value="6 GO annotations based on evolutionary models"/>
</dbReference>
<dbReference type="PhylomeDB" id="Q05209"/>
<dbReference type="TreeFam" id="TF351977"/>
<dbReference type="BRENDA" id="3.1.3.16">
    <property type="organism ID" value="2681"/>
</dbReference>
<dbReference type="BRENDA" id="3.1.3.48">
    <property type="organism ID" value="2681"/>
</dbReference>
<dbReference type="PathwayCommons" id="Q05209"/>
<dbReference type="Reactome" id="R-HSA-1250196">
    <property type="pathway name" value="SHC1 events in ERBB2 signaling"/>
</dbReference>
<dbReference type="Reactome" id="R-HSA-182971">
    <property type="pathway name" value="EGFR downregulation"/>
</dbReference>
<dbReference type="Reactome" id="R-HSA-186797">
    <property type="pathway name" value="Signaling by PDGF"/>
</dbReference>
<dbReference type="Reactome" id="R-HSA-8863795">
    <property type="pathway name" value="Downregulation of ERBB2 signaling"/>
</dbReference>
<dbReference type="Reactome" id="R-HSA-9008059">
    <property type="pathway name" value="Interleukin-37 signaling"/>
</dbReference>
<dbReference type="Reactome" id="R-HSA-9634285">
    <property type="pathway name" value="Constitutive Signaling by Overexpressed ERBB2"/>
</dbReference>
<dbReference type="SignaLink" id="Q05209"/>
<dbReference type="SIGNOR" id="Q05209"/>
<dbReference type="BioGRID-ORCS" id="5782">
    <property type="hits" value="34 hits in 1181 CRISPR screens"/>
</dbReference>
<dbReference type="ChiTaRS" id="PTPN12">
    <property type="organism name" value="human"/>
</dbReference>
<dbReference type="GeneWiki" id="PTPN12"/>
<dbReference type="GenomeRNAi" id="5782"/>
<dbReference type="Pharos" id="Q05209">
    <property type="development level" value="Tchem"/>
</dbReference>
<dbReference type="PRO" id="PR:Q05209"/>
<dbReference type="Proteomes" id="UP000005640">
    <property type="component" value="Chromosome 7"/>
</dbReference>
<dbReference type="RNAct" id="Q05209">
    <property type="molecule type" value="protein"/>
</dbReference>
<dbReference type="Bgee" id="ENSG00000127947">
    <property type="expression patterns" value="Expressed in primordial germ cell in gonad and 206 other cell types or tissues"/>
</dbReference>
<dbReference type="ExpressionAtlas" id="Q05209">
    <property type="expression patterns" value="baseline and differential"/>
</dbReference>
<dbReference type="GO" id="GO:0042995">
    <property type="term" value="C:cell projection"/>
    <property type="evidence" value="ECO:0007669"/>
    <property type="project" value="UniProtKB-KW"/>
</dbReference>
<dbReference type="GO" id="GO:0005737">
    <property type="term" value="C:cytoplasm"/>
    <property type="evidence" value="ECO:0000318"/>
    <property type="project" value="GO_Central"/>
</dbReference>
<dbReference type="GO" id="GO:0005829">
    <property type="term" value="C:cytosol"/>
    <property type="evidence" value="ECO:0000304"/>
    <property type="project" value="Reactome"/>
</dbReference>
<dbReference type="GO" id="GO:0005925">
    <property type="term" value="C:focal adhesion"/>
    <property type="evidence" value="ECO:0007669"/>
    <property type="project" value="UniProtKB-SubCell"/>
</dbReference>
<dbReference type="GO" id="GO:0005654">
    <property type="term" value="C:nucleoplasm"/>
    <property type="evidence" value="ECO:0000304"/>
    <property type="project" value="Reactome"/>
</dbReference>
<dbReference type="GO" id="GO:0005634">
    <property type="term" value="C:nucleus"/>
    <property type="evidence" value="ECO:0000318"/>
    <property type="project" value="GO_Central"/>
</dbReference>
<dbReference type="GO" id="GO:0002102">
    <property type="term" value="C:podosome"/>
    <property type="evidence" value="ECO:0007669"/>
    <property type="project" value="UniProtKB-SubCell"/>
</dbReference>
<dbReference type="GO" id="GO:0004726">
    <property type="term" value="F:non-membrane spanning protein tyrosine phosphatase activity"/>
    <property type="evidence" value="ECO:0000304"/>
    <property type="project" value="ProtInc"/>
</dbReference>
<dbReference type="GO" id="GO:0004721">
    <property type="term" value="F:phosphoprotein phosphatase activity"/>
    <property type="evidence" value="ECO:0000314"/>
    <property type="project" value="UniProtKB"/>
</dbReference>
<dbReference type="GO" id="GO:0004725">
    <property type="term" value="F:protein tyrosine phosphatase activity"/>
    <property type="evidence" value="ECO:0000269"/>
    <property type="project" value="Reactome"/>
</dbReference>
<dbReference type="GO" id="GO:0017124">
    <property type="term" value="F:SH3 domain binding"/>
    <property type="evidence" value="ECO:0000353"/>
    <property type="project" value="UniProtKB"/>
</dbReference>
<dbReference type="GO" id="GO:0071364">
    <property type="term" value="P:cellular response to epidermal growth factor stimulus"/>
    <property type="evidence" value="ECO:0000315"/>
    <property type="project" value="UniProtKB"/>
</dbReference>
<dbReference type="GO" id="GO:1901185">
    <property type="term" value="P:negative regulation of ERBB signaling pathway"/>
    <property type="evidence" value="ECO:0000304"/>
    <property type="project" value="Reactome"/>
</dbReference>
<dbReference type="GO" id="GO:2000587">
    <property type="term" value="P:negative regulation of platelet-derived growth factor receptor-beta signaling pathway"/>
    <property type="evidence" value="ECO:0000304"/>
    <property type="project" value="Reactome"/>
</dbReference>
<dbReference type="GO" id="GO:0035335">
    <property type="term" value="P:peptidyl-tyrosine dephosphorylation"/>
    <property type="evidence" value="ECO:0000314"/>
    <property type="project" value="UniProtKB"/>
</dbReference>
<dbReference type="GO" id="GO:0006470">
    <property type="term" value="P:protein dephosphorylation"/>
    <property type="evidence" value="ECO:0000314"/>
    <property type="project" value="UniProtKB"/>
</dbReference>
<dbReference type="GO" id="GO:0042058">
    <property type="term" value="P:regulation of epidermal growth factor receptor signaling pathway"/>
    <property type="evidence" value="ECO:0000315"/>
    <property type="project" value="UniProtKB"/>
</dbReference>
<dbReference type="GO" id="GO:0042246">
    <property type="term" value="P:tissue regeneration"/>
    <property type="evidence" value="ECO:0007669"/>
    <property type="project" value="Ensembl"/>
</dbReference>
<dbReference type="CDD" id="cd14604">
    <property type="entry name" value="PTPc-N12"/>
    <property type="match status" value="1"/>
</dbReference>
<dbReference type="FunFam" id="3.90.190.10:FF:000045">
    <property type="entry name" value="Tyrosine-protein phosphatase non-receptor type 12"/>
    <property type="match status" value="1"/>
</dbReference>
<dbReference type="Gene3D" id="3.90.190.10">
    <property type="entry name" value="Protein tyrosine phosphatase superfamily"/>
    <property type="match status" value="1"/>
</dbReference>
<dbReference type="InterPro" id="IPR029021">
    <property type="entry name" value="Prot-tyrosine_phosphatase-like"/>
</dbReference>
<dbReference type="InterPro" id="IPR012266">
    <property type="entry name" value="PTN12"/>
</dbReference>
<dbReference type="InterPro" id="IPR047170">
    <property type="entry name" value="PTN12/18/22"/>
</dbReference>
<dbReference type="InterPro" id="IPR047251">
    <property type="entry name" value="PTN12_cat"/>
</dbReference>
<dbReference type="InterPro" id="IPR000242">
    <property type="entry name" value="PTP_cat"/>
</dbReference>
<dbReference type="InterPro" id="IPR016130">
    <property type="entry name" value="Tyr_Pase_AS"/>
</dbReference>
<dbReference type="InterPro" id="IPR003595">
    <property type="entry name" value="Tyr_Pase_cat"/>
</dbReference>
<dbReference type="InterPro" id="IPR000387">
    <property type="entry name" value="Tyr_Pase_dom"/>
</dbReference>
<dbReference type="PANTHER" id="PTHR45983">
    <property type="entry name" value="TYROSINE PHOSPHATSE N18, PUTATIVE-RELATED"/>
    <property type="match status" value="1"/>
</dbReference>
<dbReference type="PANTHER" id="PTHR45983:SF3">
    <property type="entry name" value="TYROSINE-PROTEIN PHOSPHATASE NON-RECEPTOR TYPE 12"/>
    <property type="match status" value="1"/>
</dbReference>
<dbReference type="Pfam" id="PF00102">
    <property type="entry name" value="Y_phosphatase"/>
    <property type="match status" value="1"/>
</dbReference>
<dbReference type="PIRSF" id="PIRSF000932">
    <property type="entry name" value="Tyr-Ptase_nr12"/>
    <property type="match status" value="1"/>
</dbReference>
<dbReference type="PRINTS" id="PR00700">
    <property type="entry name" value="PRTYPHPHTASE"/>
</dbReference>
<dbReference type="SMART" id="SM00194">
    <property type="entry name" value="PTPc"/>
    <property type="match status" value="1"/>
</dbReference>
<dbReference type="SMART" id="SM00404">
    <property type="entry name" value="PTPc_motif"/>
    <property type="match status" value="1"/>
</dbReference>
<dbReference type="SUPFAM" id="SSF52799">
    <property type="entry name" value="(Phosphotyrosine protein) phosphatases II"/>
    <property type="match status" value="1"/>
</dbReference>
<dbReference type="PROSITE" id="PS00383">
    <property type="entry name" value="TYR_PHOSPHATASE_1"/>
    <property type="match status" value="1"/>
</dbReference>
<dbReference type="PROSITE" id="PS50056">
    <property type="entry name" value="TYR_PHOSPHATASE_2"/>
    <property type="match status" value="1"/>
</dbReference>
<dbReference type="PROSITE" id="PS50055">
    <property type="entry name" value="TYR_PHOSPHATASE_PTP"/>
    <property type="match status" value="1"/>
</dbReference>
<gene>
    <name type="primary">PTPN12</name>
</gene>
<organism>
    <name type="scientific">Homo sapiens</name>
    <name type="common">Human</name>
    <dbReference type="NCBI Taxonomy" id="9606"/>
    <lineage>
        <taxon>Eukaryota</taxon>
        <taxon>Metazoa</taxon>
        <taxon>Chordata</taxon>
        <taxon>Craniata</taxon>
        <taxon>Vertebrata</taxon>
        <taxon>Euteleostomi</taxon>
        <taxon>Mammalia</taxon>
        <taxon>Eutheria</taxon>
        <taxon>Euarchontoglires</taxon>
        <taxon>Primates</taxon>
        <taxon>Haplorrhini</taxon>
        <taxon>Catarrhini</taxon>
        <taxon>Hominidae</taxon>
        <taxon>Homo</taxon>
    </lineage>
</organism>
<protein>
    <recommendedName>
        <fullName>Tyrosine-protein phosphatase non-receptor type 12</fullName>
        <ecNumber evidence="12 14">3.1.3.48</ecNumber>
    </recommendedName>
    <alternativeName>
        <fullName evidence="18">PTP-PEST</fullName>
    </alternativeName>
    <alternativeName>
        <fullName>Protein-tyrosine phosphatase G1</fullName>
        <shortName>PTPG1</shortName>
    </alternativeName>
</protein>
<name>PTN12_HUMAN</name>